<feature type="chain" id="PRO_0000060420" description="tRNA (guanine-N(1)-)-methyltransferase">
    <location>
        <begin position="1"/>
        <end position="249"/>
    </location>
</feature>
<feature type="binding site" evidence="1">
    <location>
        <position position="113"/>
    </location>
    <ligand>
        <name>S-adenosyl-L-methionine</name>
        <dbReference type="ChEBI" id="CHEBI:59789"/>
    </ligand>
</feature>
<feature type="binding site" evidence="1">
    <location>
        <begin position="133"/>
        <end position="138"/>
    </location>
    <ligand>
        <name>S-adenosyl-L-methionine</name>
        <dbReference type="ChEBI" id="CHEBI:59789"/>
    </ligand>
</feature>
<organism>
    <name type="scientific">Neisseria meningitidis serogroup A / serotype 4A (strain DSM 15465 / Z2491)</name>
    <dbReference type="NCBI Taxonomy" id="122587"/>
    <lineage>
        <taxon>Bacteria</taxon>
        <taxon>Pseudomonadati</taxon>
        <taxon>Pseudomonadota</taxon>
        <taxon>Betaproteobacteria</taxon>
        <taxon>Neisseriales</taxon>
        <taxon>Neisseriaceae</taxon>
        <taxon>Neisseria</taxon>
    </lineage>
</organism>
<proteinExistence type="inferred from homology"/>
<protein>
    <recommendedName>
        <fullName>tRNA (guanine-N(1)-)-methyltransferase</fullName>
        <ecNumber>2.1.1.228</ecNumber>
    </recommendedName>
    <alternativeName>
        <fullName>M1G-methyltransferase</fullName>
    </alternativeName>
    <alternativeName>
        <fullName>tRNA [GM37] methyltransferase</fullName>
    </alternativeName>
</protein>
<gene>
    <name type="primary">trmD</name>
    <name type="ordered locus">NMA0793</name>
</gene>
<reference key="1">
    <citation type="journal article" date="2000" name="Nature">
        <title>Complete DNA sequence of a serogroup A strain of Neisseria meningitidis Z2491.</title>
        <authorList>
            <person name="Parkhill J."/>
            <person name="Achtman M."/>
            <person name="James K.D."/>
            <person name="Bentley S.D."/>
            <person name="Churcher C.M."/>
            <person name="Klee S.R."/>
            <person name="Morelli G."/>
            <person name="Basham D."/>
            <person name="Brown D."/>
            <person name="Chillingworth T."/>
            <person name="Davies R.M."/>
            <person name="Davis P."/>
            <person name="Devlin K."/>
            <person name="Feltwell T."/>
            <person name="Hamlin N."/>
            <person name="Holroyd S."/>
            <person name="Jagels K."/>
            <person name="Leather S."/>
            <person name="Moule S."/>
            <person name="Mungall K.L."/>
            <person name="Quail M.A."/>
            <person name="Rajandream M.A."/>
            <person name="Rutherford K.M."/>
            <person name="Simmonds M."/>
            <person name="Skelton J."/>
            <person name="Whitehead S."/>
            <person name="Spratt B.G."/>
            <person name="Barrell B.G."/>
        </authorList>
    </citation>
    <scope>NUCLEOTIDE SEQUENCE [LARGE SCALE GENOMIC DNA]</scope>
    <source>
        <strain>DSM 15465 / Z2491</strain>
    </source>
</reference>
<name>TRMD_NEIMA</name>
<keyword id="KW-0963">Cytoplasm</keyword>
<keyword id="KW-0489">Methyltransferase</keyword>
<keyword id="KW-0949">S-adenosyl-L-methionine</keyword>
<keyword id="KW-0808">Transferase</keyword>
<keyword id="KW-0819">tRNA processing</keyword>
<comment type="function">
    <text evidence="1">Specifically methylates guanosine-37 in various tRNAs.</text>
</comment>
<comment type="catalytic activity">
    <reaction>
        <text>guanosine(37) in tRNA + S-adenosyl-L-methionine = N(1)-methylguanosine(37) in tRNA + S-adenosyl-L-homocysteine + H(+)</text>
        <dbReference type="Rhea" id="RHEA:36899"/>
        <dbReference type="Rhea" id="RHEA-COMP:10145"/>
        <dbReference type="Rhea" id="RHEA-COMP:10147"/>
        <dbReference type="ChEBI" id="CHEBI:15378"/>
        <dbReference type="ChEBI" id="CHEBI:57856"/>
        <dbReference type="ChEBI" id="CHEBI:59789"/>
        <dbReference type="ChEBI" id="CHEBI:73542"/>
        <dbReference type="ChEBI" id="CHEBI:74269"/>
        <dbReference type="EC" id="2.1.1.228"/>
    </reaction>
</comment>
<comment type="subunit">
    <text evidence="1">Homodimer.</text>
</comment>
<comment type="subcellular location">
    <subcellularLocation>
        <location evidence="2">Cytoplasm</location>
    </subcellularLocation>
</comment>
<comment type="similarity">
    <text evidence="2">Belongs to the RNA methyltransferase TrmD family.</text>
</comment>
<sequence>MLIQAVTIFPEMFDSITRYGVTGRANRQGIWQFEAVNPRKFADNRLGYIDDRPFGGGPGMIMMAPPLHAAIEHAKAQSSQAAKVIYLSPQGKPLTHPKAAELAELPHLILLCGRYEGIDERLLQTSVDEEISIGDFVVSGGELPAMMLMDAVLRLVPGVLGDMQSAEQDSFSSGILDCPHYTKPLEFQGMAVPEVLRSGNHGLIAEWRLEQSLRRTLERRPDLLEKRVLIPKESRLLETIRQEQREIQS</sequence>
<dbReference type="EC" id="2.1.1.228"/>
<dbReference type="EMBL" id="AL157959">
    <property type="protein sequence ID" value="CAM08039.1"/>
    <property type="molecule type" value="Genomic_DNA"/>
</dbReference>
<dbReference type="PIR" id="A81924">
    <property type="entry name" value="A81924"/>
</dbReference>
<dbReference type="RefSeq" id="WP_002229145.1">
    <property type="nucleotide sequence ID" value="NC_003116.1"/>
</dbReference>
<dbReference type="SMR" id="Q9JVL0"/>
<dbReference type="EnsemblBacteria" id="CAM08039">
    <property type="protein sequence ID" value="CAM08039"/>
    <property type="gene ID" value="NMA0793"/>
</dbReference>
<dbReference type="GeneID" id="93386580"/>
<dbReference type="KEGG" id="nma:NMA0793"/>
<dbReference type="HOGENOM" id="CLU_047363_0_1_4"/>
<dbReference type="Proteomes" id="UP000000626">
    <property type="component" value="Chromosome"/>
</dbReference>
<dbReference type="GO" id="GO:0005829">
    <property type="term" value="C:cytosol"/>
    <property type="evidence" value="ECO:0007669"/>
    <property type="project" value="TreeGrafter"/>
</dbReference>
<dbReference type="GO" id="GO:0052906">
    <property type="term" value="F:tRNA (guanine(37)-N1)-methyltransferase activity"/>
    <property type="evidence" value="ECO:0007669"/>
    <property type="project" value="UniProtKB-UniRule"/>
</dbReference>
<dbReference type="GO" id="GO:0002939">
    <property type="term" value="P:tRNA N1-guanine methylation"/>
    <property type="evidence" value="ECO:0007669"/>
    <property type="project" value="TreeGrafter"/>
</dbReference>
<dbReference type="CDD" id="cd18080">
    <property type="entry name" value="TrmD-like"/>
    <property type="match status" value="1"/>
</dbReference>
<dbReference type="FunFam" id="1.10.1270.20:FF:000001">
    <property type="entry name" value="tRNA (guanine-N(1)-)-methyltransferase"/>
    <property type="match status" value="1"/>
</dbReference>
<dbReference type="FunFam" id="3.40.1280.10:FF:000001">
    <property type="entry name" value="tRNA (guanine-N(1)-)-methyltransferase"/>
    <property type="match status" value="1"/>
</dbReference>
<dbReference type="Gene3D" id="3.40.1280.10">
    <property type="match status" value="1"/>
</dbReference>
<dbReference type="Gene3D" id="1.10.1270.20">
    <property type="entry name" value="tRNA(m1g37)methyltransferase, domain 2"/>
    <property type="match status" value="1"/>
</dbReference>
<dbReference type="HAMAP" id="MF_00605">
    <property type="entry name" value="TrmD"/>
    <property type="match status" value="1"/>
</dbReference>
<dbReference type="InterPro" id="IPR029028">
    <property type="entry name" value="Alpha/beta_knot_MTases"/>
</dbReference>
<dbReference type="InterPro" id="IPR023148">
    <property type="entry name" value="tRNA_m1G_MeTrfase_C_sf"/>
</dbReference>
<dbReference type="InterPro" id="IPR002649">
    <property type="entry name" value="tRNA_m1G_MeTrfase_TrmD"/>
</dbReference>
<dbReference type="InterPro" id="IPR029026">
    <property type="entry name" value="tRNA_m1G_MTases_N"/>
</dbReference>
<dbReference type="InterPro" id="IPR016009">
    <property type="entry name" value="tRNA_MeTrfase_TRMD/TRM10"/>
</dbReference>
<dbReference type="NCBIfam" id="NF000648">
    <property type="entry name" value="PRK00026.1"/>
    <property type="match status" value="1"/>
</dbReference>
<dbReference type="NCBIfam" id="TIGR00088">
    <property type="entry name" value="trmD"/>
    <property type="match status" value="1"/>
</dbReference>
<dbReference type="PANTHER" id="PTHR46417">
    <property type="entry name" value="TRNA (GUANINE-N(1)-)-METHYLTRANSFERASE"/>
    <property type="match status" value="1"/>
</dbReference>
<dbReference type="PANTHER" id="PTHR46417:SF1">
    <property type="entry name" value="TRNA (GUANINE-N(1)-)-METHYLTRANSFERASE"/>
    <property type="match status" value="1"/>
</dbReference>
<dbReference type="Pfam" id="PF01746">
    <property type="entry name" value="tRNA_m1G_MT"/>
    <property type="match status" value="1"/>
</dbReference>
<dbReference type="PIRSF" id="PIRSF000386">
    <property type="entry name" value="tRNA_mtase"/>
    <property type="match status" value="1"/>
</dbReference>
<dbReference type="SUPFAM" id="SSF75217">
    <property type="entry name" value="alpha/beta knot"/>
    <property type="match status" value="1"/>
</dbReference>
<accession>Q9JVL0</accession>
<accession>A1IQK7</accession>
<evidence type="ECO:0000250" key="1"/>
<evidence type="ECO:0000305" key="2"/>